<sequence length="174" mass="20357">MTKLIIMTLCLIMSFIFMQMKHPLSMGLMLLIQTFLTCLITSIYVKTFWFSYVLFLIFLGGMLILFIYVTSLSSNEMFSMSFSLTLISLIIFSIFTIVFFMIDKSLIEQFITNMEMEKLSNMNNLINENILSLNKMYNFPTNLITLLLINYLFLTLLVTVKITKKFYGPLRPMN</sequence>
<organism>
    <name type="scientific">Anopheles albimanus</name>
    <name type="common">New world malaria mosquito</name>
    <dbReference type="NCBI Taxonomy" id="7167"/>
    <lineage>
        <taxon>Eukaryota</taxon>
        <taxon>Metazoa</taxon>
        <taxon>Ecdysozoa</taxon>
        <taxon>Arthropoda</taxon>
        <taxon>Hexapoda</taxon>
        <taxon>Insecta</taxon>
        <taxon>Pterygota</taxon>
        <taxon>Neoptera</taxon>
        <taxon>Endopterygota</taxon>
        <taxon>Diptera</taxon>
        <taxon>Nematocera</taxon>
        <taxon>Culicoidea</taxon>
        <taxon>Culicidae</taxon>
        <taxon>Anophelinae</taxon>
        <taxon>Anopheles</taxon>
    </lineage>
</organism>
<gene>
    <name type="primary">ND6</name>
</gene>
<reference key="1">
    <citation type="submission" date="1995-10" db="EMBL/GenBank/DDBJ databases">
        <authorList>
            <person name="Perera O.P."/>
            <person name="Cockburn A.F."/>
            <person name="Conn J.E."/>
            <person name="Seawright J.A."/>
        </authorList>
    </citation>
    <scope>NUCLEOTIDE SEQUENCE [GENOMIC DNA]</scope>
</reference>
<accession>Q33635</accession>
<name>NU6M_ANOAL</name>
<feature type="chain" id="PRO_0000118238" description="NADH-ubiquinone oxidoreductase chain 6">
    <location>
        <begin position="1"/>
        <end position="174"/>
    </location>
</feature>
<feature type="transmembrane region" description="Helical" evidence="2">
    <location>
        <begin position="25"/>
        <end position="45"/>
    </location>
</feature>
<feature type="transmembrane region" description="Helical" evidence="2">
    <location>
        <begin position="48"/>
        <end position="68"/>
    </location>
</feature>
<feature type="transmembrane region" description="Helical" evidence="2">
    <location>
        <begin position="82"/>
        <end position="102"/>
    </location>
</feature>
<feature type="transmembrane region" description="Helical" evidence="2">
    <location>
        <begin position="143"/>
        <end position="163"/>
    </location>
</feature>
<protein>
    <recommendedName>
        <fullName>NADH-ubiquinone oxidoreductase chain 6</fullName>
        <ecNumber>7.1.1.2</ecNumber>
    </recommendedName>
    <alternativeName>
        <fullName>NADH dehydrogenase subunit 6</fullName>
    </alternativeName>
</protein>
<keyword id="KW-0249">Electron transport</keyword>
<keyword id="KW-0472">Membrane</keyword>
<keyword id="KW-0496">Mitochondrion</keyword>
<keyword id="KW-0520">NAD</keyword>
<keyword id="KW-0679">Respiratory chain</keyword>
<keyword id="KW-1278">Translocase</keyword>
<keyword id="KW-0812">Transmembrane</keyword>
<keyword id="KW-1133">Transmembrane helix</keyword>
<keyword id="KW-0813">Transport</keyword>
<keyword id="KW-0830">Ubiquinone</keyword>
<comment type="function">
    <text evidence="1">Core subunit of the mitochondrial membrane respiratory chain NADH dehydrogenase (Complex I) that is believed to belong to the minimal assembly required for catalysis. Complex I functions in the transfer of electrons from NADH to the respiratory chain. The immediate electron acceptor for the enzyme is believed to be ubiquinone (By similarity).</text>
</comment>
<comment type="catalytic activity">
    <reaction>
        <text>a ubiquinone + NADH + 5 H(+)(in) = a ubiquinol + NAD(+) + 4 H(+)(out)</text>
        <dbReference type="Rhea" id="RHEA:29091"/>
        <dbReference type="Rhea" id="RHEA-COMP:9565"/>
        <dbReference type="Rhea" id="RHEA-COMP:9566"/>
        <dbReference type="ChEBI" id="CHEBI:15378"/>
        <dbReference type="ChEBI" id="CHEBI:16389"/>
        <dbReference type="ChEBI" id="CHEBI:17976"/>
        <dbReference type="ChEBI" id="CHEBI:57540"/>
        <dbReference type="ChEBI" id="CHEBI:57945"/>
        <dbReference type="EC" id="7.1.1.2"/>
    </reaction>
</comment>
<comment type="subcellular location">
    <subcellularLocation>
        <location evidence="3">Mitochondrion membrane</location>
        <topology evidence="3">Multi-pass membrane protein</topology>
    </subcellularLocation>
</comment>
<comment type="similarity">
    <text evidence="3">Belongs to the complex I subunit 6 family.</text>
</comment>
<comment type="sequence caution" evidence="3">
    <conflict type="erroneous initiation">
        <sequence resource="EMBL-CDS" id="AAA79929"/>
    </conflict>
</comment>
<proteinExistence type="inferred from homology"/>
<evidence type="ECO:0000250" key="1"/>
<evidence type="ECO:0000255" key="2"/>
<evidence type="ECO:0000305" key="3"/>
<geneLocation type="mitochondrion"/>
<dbReference type="EC" id="7.1.1.2"/>
<dbReference type="EMBL" id="U35259">
    <property type="protein sequence ID" value="AAA79929.1"/>
    <property type="status" value="ALT_INIT"/>
    <property type="molecule type" value="Genomic_DNA"/>
</dbReference>
<dbReference type="SMR" id="Q33635"/>
<dbReference type="Proteomes" id="UP000069272">
    <property type="component" value="Unassembled WGS sequence"/>
</dbReference>
<dbReference type="GO" id="GO:0031966">
    <property type="term" value="C:mitochondrial membrane"/>
    <property type="evidence" value="ECO:0007669"/>
    <property type="project" value="UniProtKB-SubCell"/>
</dbReference>
<dbReference type="GO" id="GO:0008137">
    <property type="term" value="F:NADH dehydrogenase (ubiquinone) activity"/>
    <property type="evidence" value="ECO:0007669"/>
    <property type="project" value="UniProtKB-EC"/>
</dbReference>
<dbReference type="InterPro" id="IPR050269">
    <property type="entry name" value="ComplexI_Subunit6"/>
</dbReference>
<dbReference type="InterPro" id="IPR001457">
    <property type="entry name" value="NADH_UbQ/plastoQ_OxRdtase_su6"/>
</dbReference>
<dbReference type="PANTHER" id="PTHR11435">
    <property type="entry name" value="NADH UBIQUINONE OXIDOREDUCTASE SUBUNIT ND6"/>
    <property type="match status" value="1"/>
</dbReference>
<dbReference type="PANTHER" id="PTHR11435:SF1">
    <property type="entry name" value="NADH-UBIQUINONE OXIDOREDUCTASE CHAIN 6"/>
    <property type="match status" value="1"/>
</dbReference>
<dbReference type="Pfam" id="PF00499">
    <property type="entry name" value="Oxidored_q3"/>
    <property type="match status" value="1"/>
</dbReference>